<comment type="function">
    <text evidence="3">Acts as a nuclear transcription factor that positively regulates the expression of heat shock genes. Binds to heat shock promoter elements (HSE).</text>
</comment>
<comment type="subcellular location">
    <subcellularLocation>
        <location evidence="3">Nucleus</location>
    </subcellularLocation>
</comment>
<comment type="alternative products">
    <event type="alternative splicing"/>
    <isoform>
        <id>A1A519-1</id>
        <name>1</name>
        <sequence type="displayed"/>
    </isoform>
    <isoform>
        <id>A1A519-2</id>
        <name>2</name>
        <sequence type="described" ref="VSP_032557"/>
    </isoform>
    <isoform>
        <id>A1A519-3</id>
        <name>3</name>
        <sequence type="described" ref="VSP_032556 VSP_032557"/>
    </isoform>
    <isoform>
        <id>A1A519-4</id>
        <name>4</name>
        <sequence type="described" ref="VSP_035475 VSP_035476 VSP_035477"/>
    </isoform>
</comment>
<comment type="tissue specificity">
    <text evidence="3">Expressed strongly in testis and brain and weakly in prostate, spleen, pancreas and uterus.</text>
</comment>
<comment type="domain">
    <text>The N-terminus is necessary for nuclear localization. The C-terminus is necessary for transcriptional activity.</text>
</comment>
<comment type="similarity">
    <text evidence="8">Belongs to the FAM170 family.</text>
</comment>
<comment type="sequence caution" evidence="8">
    <conflict type="erroneous initiation">
        <sequence resource="EMBL-CDS" id="AAH40622"/>
    </conflict>
    <text>Extended N-terminus.</text>
</comment>
<gene>
    <name type="primary">FAM170A</name>
    <name type="synonym">ZNFD</name>
</gene>
<feature type="chain" id="PRO_0000326110" description="Protein FAM170A">
    <location>
        <begin position="1"/>
        <end position="330"/>
    </location>
</feature>
<feature type="zinc finger region" description="C2H2-type; degenerate">
    <location>
        <begin position="228"/>
        <end position="252"/>
    </location>
</feature>
<feature type="region of interest" description="Disordered" evidence="2">
    <location>
        <begin position="1"/>
        <end position="54"/>
    </location>
</feature>
<feature type="region of interest" description="Disordered" evidence="2">
    <location>
        <begin position="76"/>
        <end position="104"/>
    </location>
</feature>
<feature type="region of interest" description="Disordered" evidence="2">
    <location>
        <begin position="169"/>
        <end position="218"/>
    </location>
</feature>
<feature type="region of interest" description="Disordered" evidence="2">
    <location>
        <begin position="270"/>
        <end position="330"/>
    </location>
</feature>
<feature type="compositionally biased region" description="Polar residues" evidence="2">
    <location>
        <begin position="174"/>
        <end position="185"/>
    </location>
</feature>
<feature type="compositionally biased region" description="Basic and acidic residues" evidence="2">
    <location>
        <begin position="189"/>
        <end position="200"/>
    </location>
</feature>
<feature type="compositionally biased region" description="Acidic residues" evidence="2">
    <location>
        <begin position="275"/>
        <end position="293"/>
    </location>
</feature>
<feature type="modified residue" description="Phosphothreonine" evidence="1">
    <location>
        <position position="217"/>
    </location>
</feature>
<feature type="modified residue" description="Phosphoserine" evidence="1">
    <location>
        <position position="315"/>
    </location>
</feature>
<feature type="splice variant" id="VSP_032556" description="In isoform 3." evidence="6">
    <location>
        <begin position="24"/>
        <end position="70"/>
    </location>
</feature>
<feature type="splice variant" id="VSP_035475" description="In isoform 4." evidence="7">
    <location>
        <begin position="25"/>
        <end position="71"/>
    </location>
</feature>
<feature type="splice variant" id="VSP_035476" description="In isoform 4." evidence="7">
    <original>HVFHLTMAQLTGNMESESTQDEQEEENGNEKEEE</original>
    <variation>PKMSRRRKMEMRRRRKRNQKQRRRRGSPQKKTLA</variation>
    <location>
        <begin position="258"/>
        <end position="291"/>
    </location>
</feature>
<feature type="splice variant" id="VSP_035477" description="In isoform 4." evidence="7">
    <location>
        <begin position="292"/>
        <end position="330"/>
    </location>
</feature>
<feature type="splice variant" id="VSP_032557" description="In isoform 2 and isoform 3." evidence="4 5 6">
    <location>
        <position position="330"/>
    </location>
</feature>
<feature type="sequence variant" id="VAR_047312" description="In dbSNP:rs328694.">
    <original>P</original>
    <variation>S</variation>
    <location>
        <position position="173"/>
    </location>
</feature>
<reference key="1">
    <citation type="journal article" date="2010" name="Mol. Cell. Biochem.">
        <title>Isolation and characterization of a novel zinc finger gene, ZNFD, activating AP1(PMA) transcriptional activities.</title>
        <authorList>
            <person name="Lei C."/>
            <person name="Liu Q."/>
            <person name="Wang W."/>
            <person name="Li J."/>
            <person name="Xu F."/>
            <person name="Liu Y."/>
            <person name="Liu J."/>
            <person name="Wu S."/>
            <person name="Wang M."/>
        </authorList>
    </citation>
    <scope>NUCLEOTIDE SEQUENCE [MRNA] (ISOFORM 2)</scope>
    <scope>FUNCTION</scope>
    <scope>SUBCELLULAR LOCATION</scope>
    <scope>TISSUE SPECIFICITY</scope>
    <source>
        <tissue>Testis</tissue>
    </source>
</reference>
<reference key="2">
    <citation type="submission" date="2004-07" db="EMBL/GenBank/DDBJ databases">
        <authorList>
            <person name="Huang C.Q."/>
            <person name="Liu S."/>
            <person name="Zhai Q.T."/>
        </authorList>
    </citation>
    <scope>NUCLEOTIDE SEQUENCE [MRNA] (ISOFORM 3)</scope>
</reference>
<reference key="3">
    <citation type="submission" date="2001-10" db="EMBL/GenBank/DDBJ databases">
        <authorList>
            <person name="Guo J.H."/>
            <person name="She X.Y."/>
            <person name="Yu L."/>
        </authorList>
    </citation>
    <scope>NUCLEOTIDE SEQUENCE [LARGE SCALE MRNA] (ISOFORM 4)</scope>
</reference>
<reference key="4">
    <citation type="journal article" date="2004" name="Nature">
        <title>The DNA sequence and comparative analysis of human chromosome 5.</title>
        <authorList>
            <person name="Schmutz J."/>
            <person name="Martin J."/>
            <person name="Terry A."/>
            <person name="Couronne O."/>
            <person name="Grimwood J."/>
            <person name="Lowry S."/>
            <person name="Gordon L.A."/>
            <person name="Scott D."/>
            <person name="Xie G."/>
            <person name="Huang W."/>
            <person name="Hellsten U."/>
            <person name="Tran-Gyamfi M."/>
            <person name="She X."/>
            <person name="Prabhakar S."/>
            <person name="Aerts A."/>
            <person name="Altherr M."/>
            <person name="Bajorek E."/>
            <person name="Black S."/>
            <person name="Branscomb E."/>
            <person name="Caoile C."/>
            <person name="Challacombe J.F."/>
            <person name="Chan Y.M."/>
            <person name="Denys M."/>
            <person name="Detter J.C."/>
            <person name="Escobar J."/>
            <person name="Flowers D."/>
            <person name="Fotopulos D."/>
            <person name="Glavina T."/>
            <person name="Gomez M."/>
            <person name="Gonzales E."/>
            <person name="Goodstein D."/>
            <person name="Grigoriev I."/>
            <person name="Groza M."/>
            <person name="Hammon N."/>
            <person name="Hawkins T."/>
            <person name="Haydu L."/>
            <person name="Israni S."/>
            <person name="Jett J."/>
            <person name="Kadner K."/>
            <person name="Kimball H."/>
            <person name="Kobayashi A."/>
            <person name="Lopez F."/>
            <person name="Lou Y."/>
            <person name="Martinez D."/>
            <person name="Medina C."/>
            <person name="Morgan J."/>
            <person name="Nandkeshwar R."/>
            <person name="Noonan J.P."/>
            <person name="Pitluck S."/>
            <person name="Pollard M."/>
            <person name="Predki P."/>
            <person name="Priest J."/>
            <person name="Ramirez L."/>
            <person name="Retterer J."/>
            <person name="Rodriguez A."/>
            <person name="Rogers S."/>
            <person name="Salamov A."/>
            <person name="Salazar A."/>
            <person name="Thayer N."/>
            <person name="Tice H."/>
            <person name="Tsai M."/>
            <person name="Ustaszewska A."/>
            <person name="Vo N."/>
            <person name="Wheeler J."/>
            <person name="Wu K."/>
            <person name="Yang J."/>
            <person name="Dickson M."/>
            <person name="Cheng J.-F."/>
            <person name="Eichler E.E."/>
            <person name="Olsen A."/>
            <person name="Pennacchio L.A."/>
            <person name="Rokhsar D.S."/>
            <person name="Richardson P."/>
            <person name="Lucas S.M."/>
            <person name="Myers R.M."/>
            <person name="Rubin E.M."/>
        </authorList>
    </citation>
    <scope>NUCLEOTIDE SEQUENCE [LARGE SCALE GENOMIC DNA]</scope>
</reference>
<reference key="5">
    <citation type="journal article" date="2004" name="Genome Res.">
        <title>The status, quality, and expansion of the NIH full-length cDNA project: the Mammalian Gene Collection (MGC).</title>
        <authorList>
            <consortium name="The MGC Project Team"/>
        </authorList>
    </citation>
    <scope>NUCLEOTIDE SEQUENCE [LARGE SCALE MRNA] (ISOFORMS 1 AND 2)</scope>
    <source>
        <tissue>Brain</tissue>
    </source>
</reference>
<sequence length="330" mass="37158">MKRRQKRKHLENEESQETAEKGGGMSKSQEDALQPGSTRVAKGWSQGVGEVTSTSEYCSCVSSSRKLIHSGIQRIHRDSPQPQSPLAQVQERGETPPRSQHVSLSSYSSYKTCVSSLCVNKEERGMKIYYMQVQMNKGVAVSWETEETLESLEKQPRMEEVTLSEVVRVGTPPSDVSTRNLLSDSEPSGEEKEHEERTESDSLPGSPTVEDTPRAKTPDWLVTMENGFRCMACCRVFTTMEALQEHVQFGIREGFSCHVFHLTMAQLTGNMESESTQDEQEEENGNEKEEEEKPEAKEEEGQPTEEDLGLRRSWSQCPGCVFHSPKDRNS</sequence>
<evidence type="ECO:0000250" key="1">
    <source>
        <dbReference type="UniProtKB" id="Q66LM6"/>
    </source>
</evidence>
<evidence type="ECO:0000256" key="2">
    <source>
        <dbReference type="SAM" id="MobiDB-lite"/>
    </source>
</evidence>
<evidence type="ECO:0000269" key="3">
    <source>
    </source>
</evidence>
<evidence type="ECO:0000303" key="4">
    <source>
    </source>
</evidence>
<evidence type="ECO:0000303" key="5">
    <source>
    </source>
</evidence>
<evidence type="ECO:0000303" key="6">
    <source ref="2"/>
</evidence>
<evidence type="ECO:0000303" key="7">
    <source ref="3"/>
</evidence>
<evidence type="ECO:0000305" key="8"/>
<proteinExistence type="evidence at protein level"/>
<protein>
    <recommendedName>
        <fullName>Protein FAM170A</fullName>
    </recommendedName>
    <alternativeName>
        <fullName>Zinc finger domain-containing protein</fullName>
    </alternativeName>
    <alternativeName>
        <fullName>Zinc finger protein ZNFD</fullName>
    </alternativeName>
</protein>
<organism>
    <name type="scientific">Homo sapiens</name>
    <name type="common">Human</name>
    <dbReference type="NCBI Taxonomy" id="9606"/>
    <lineage>
        <taxon>Eukaryota</taxon>
        <taxon>Metazoa</taxon>
        <taxon>Chordata</taxon>
        <taxon>Craniata</taxon>
        <taxon>Vertebrata</taxon>
        <taxon>Euteleostomi</taxon>
        <taxon>Mammalia</taxon>
        <taxon>Eutheria</taxon>
        <taxon>Euarchontoglires</taxon>
        <taxon>Primates</taxon>
        <taxon>Haplorrhini</taxon>
        <taxon>Catarrhini</taxon>
        <taxon>Hominidae</taxon>
        <taxon>Homo</taxon>
    </lineage>
</organism>
<dbReference type="EMBL" id="AY692447">
    <property type="protein sequence ID" value="AAU04855.1"/>
    <property type="molecule type" value="mRNA"/>
</dbReference>
<dbReference type="EMBL" id="AF427126">
    <property type="protein sequence ID" value="AAP97296.1"/>
    <property type="molecule type" value="mRNA"/>
</dbReference>
<dbReference type="EMBL" id="AC010409">
    <property type="status" value="NOT_ANNOTATED_CDS"/>
    <property type="molecule type" value="Genomic_DNA"/>
</dbReference>
<dbReference type="EMBL" id="BC040622">
    <property type="protein sequence ID" value="AAH40622.1"/>
    <property type="status" value="ALT_INIT"/>
    <property type="molecule type" value="mRNA"/>
</dbReference>
<dbReference type="EMBL" id="BC128243">
    <property type="protein sequence ID" value="AAI28244.1"/>
    <property type="molecule type" value="mRNA"/>
</dbReference>
<dbReference type="CCDS" id="CCDS43353.1">
    <molecule id="A1A519-2"/>
</dbReference>
<dbReference type="CCDS" id="CCDS54889.1">
    <molecule id="A1A519-3"/>
</dbReference>
<dbReference type="CCDS" id="CCDS93765.1">
    <molecule id="A1A519-1"/>
</dbReference>
<dbReference type="RefSeq" id="NP_001157463.1">
    <molecule id="A1A519-3"/>
    <property type="nucleotide sequence ID" value="NM_001163991.2"/>
</dbReference>
<dbReference type="RefSeq" id="NP_001354885.1">
    <molecule id="A1A519-1"/>
    <property type="nucleotide sequence ID" value="NM_001367956.1"/>
</dbReference>
<dbReference type="RefSeq" id="NP_877438.2">
    <molecule id="A1A519-2"/>
    <property type="nucleotide sequence ID" value="NM_182761.4"/>
</dbReference>
<dbReference type="BioGRID" id="130989">
    <property type="interactions" value="22"/>
</dbReference>
<dbReference type="FunCoup" id="A1A519">
    <property type="interactions" value="39"/>
</dbReference>
<dbReference type="IntAct" id="A1A519">
    <property type="interactions" value="18"/>
</dbReference>
<dbReference type="STRING" id="9606.ENSP00000482552"/>
<dbReference type="iPTMnet" id="A1A519"/>
<dbReference type="PhosphoSitePlus" id="A1A519"/>
<dbReference type="BioMuta" id="FAM170A"/>
<dbReference type="jPOST" id="A1A519"/>
<dbReference type="MassIVE" id="A1A519"/>
<dbReference type="PaxDb" id="9606-ENSP00000482552"/>
<dbReference type="PeptideAtlas" id="A1A519"/>
<dbReference type="ProteomicsDB" id="100">
    <molecule id="A1A519-1"/>
</dbReference>
<dbReference type="ProteomicsDB" id="101">
    <molecule id="A1A519-2"/>
</dbReference>
<dbReference type="ProteomicsDB" id="102">
    <molecule id="A1A519-3"/>
</dbReference>
<dbReference type="ProteomicsDB" id="103">
    <molecule id="A1A519-4"/>
</dbReference>
<dbReference type="Antibodypedia" id="50043">
    <property type="antibodies" value="64 antibodies from 10 providers"/>
</dbReference>
<dbReference type="DNASU" id="340069"/>
<dbReference type="Ensembl" id="ENST00000335286.10">
    <molecule id="A1A519-2"/>
    <property type="protein sequence ID" value="ENSP00000334285.6"/>
    <property type="gene ID" value="ENSG00000164334.16"/>
</dbReference>
<dbReference type="Ensembl" id="ENST00000379555.7">
    <molecule id="A1A519-3"/>
    <property type="protein sequence ID" value="ENSP00000368873.3"/>
    <property type="gene ID" value="ENSG00000164334.16"/>
</dbReference>
<dbReference type="Ensembl" id="ENST00000695508.1">
    <molecule id="A1A519-1"/>
    <property type="protein sequence ID" value="ENSP00000511971.1"/>
    <property type="gene ID" value="ENSG00000164334.16"/>
</dbReference>
<dbReference type="GeneID" id="340069"/>
<dbReference type="KEGG" id="hsa:340069"/>
<dbReference type="MANE-Select" id="ENST00000695508.1">
    <property type="protein sequence ID" value="ENSP00000511971.1"/>
    <property type="RefSeq nucleotide sequence ID" value="NM_001367956.1"/>
    <property type="RefSeq protein sequence ID" value="NP_001354885.1"/>
</dbReference>
<dbReference type="UCSC" id="uc003ksm.3">
    <molecule id="A1A519-1"/>
    <property type="organism name" value="human"/>
</dbReference>
<dbReference type="AGR" id="HGNC:27963"/>
<dbReference type="CTD" id="340069"/>
<dbReference type="DisGeNET" id="340069"/>
<dbReference type="GeneCards" id="FAM170A"/>
<dbReference type="HGNC" id="HGNC:27963">
    <property type="gene designation" value="FAM170A"/>
</dbReference>
<dbReference type="HPA" id="ENSG00000164334">
    <property type="expression patterns" value="Tissue enriched (testis)"/>
</dbReference>
<dbReference type="MIM" id="618401">
    <property type="type" value="gene"/>
</dbReference>
<dbReference type="neXtProt" id="NX_A1A519"/>
<dbReference type="OpenTargets" id="ENSG00000164334"/>
<dbReference type="PharmGKB" id="PA162387167"/>
<dbReference type="VEuPathDB" id="HostDB:ENSG00000164334"/>
<dbReference type="eggNOG" id="ENOG502TH7F">
    <property type="taxonomic scope" value="Eukaryota"/>
</dbReference>
<dbReference type="GeneTree" id="ENSGT00940000162220"/>
<dbReference type="HOGENOM" id="CLU_062038_2_0_1"/>
<dbReference type="InParanoid" id="A1A519"/>
<dbReference type="OMA" id="HVFHRTM"/>
<dbReference type="OrthoDB" id="9447948at2759"/>
<dbReference type="PAN-GO" id="A1A519">
    <property type="GO annotations" value="2 GO annotations based on evolutionary models"/>
</dbReference>
<dbReference type="PhylomeDB" id="A1A519"/>
<dbReference type="TreeFam" id="TF337124"/>
<dbReference type="PathwayCommons" id="A1A519"/>
<dbReference type="SignaLink" id="A1A519"/>
<dbReference type="BioGRID-ORCS" id="340069">
    <property type="hits" value="12 hits in 1151 CRISPR screens"/>
</dbReference>
<dbReference type="ChiTaRS" id="FAM170A">
    <property type="organism name" value="human"/>
</dbReference>
<dbReference type="GenomeRNAi" id="340069"/>
<dbReference type="Pharos" id="A1A519">
    <property type="development level" value="Tdark"/>
</dbReference>
<dbReference type="PRO" id="PR:A1A519"/>
<dbReference type="Proteomes" id="UP000005640">
    <property type="component" value="Chromosome 5"/>
</dbReference>
<dbReference type="RNAct" id="A1A519">
    <property type="molecule type" value="protein"/>
</dbReference>
<dbReference type="Bgee" id="ENSG00000164334">
    <property type="expression patterns" value="Expressed in male germ line stem cell (sensu Vertebrata) in testis and 51 other cell types or tissues"/>
</dbReference>
<dbReference type="ExpressionAtlas" id="A1A519">
    <property type="expression patterns" value="baseline and differential"/>
</dbReference>
<dbReference type="GO" id="GO:0005634">
    <property type="term" value="C:nucleus"/>
    <property type="evidence" value="ECO:0000314"/>
    <property type="project" value="UniProtKB"/>
</dbReference>
<dbReference type="GO" id="GO:0003677">
    <property type="term" value="F:DNA binding"/>
    <property type="evidence" value="ECO:0007669"/>
    <property type="project" value="UniProtKB-KW"/>
</dbReference>
<dbReference type="GO" id="GO:0008270">
    <property type="term" value="F:zinc ion binding"/>
    <property type="evidence" value="ECO:0007669"/>
    <property type="project" value="UniProtKB-KW"/>
</dbReference>
<dbReference type="GO" id="GO:0009566">
    <property type="term" value="P:fertilization"/>
    <property type="evidence" value="ECO:0000318"/>
    <property type="project" value="GO_Central"/>
</dbReference>
<dbReference type="GO" id="GO:0045893">
    <property type="term" value="P:positive regulation of DNA-templated transcription"/>
    <property type="evidence" value="ECO:0000314"/>
    <property type="project" value="UniProtKB"/>
</dbReference>
<dbReference type="GO" id="GO:0006366">
    <property type="term" value="P:transcription by RNA polymerase II"/>
    <property type="evidence" value="ECO:0000314"/>
    <property type="project" value="UniProtKB"/>
</dbReference>
<dbReference type="InterPro" id="IPR040879">
    <property type="entry name" value="Spt46-like"/>
</dbReference>
<dbReference type="PANTHER" id="PTHR33517:SF3">
    <property type="entry name" value="PROTEIN FAM170A"/>
    <property type="match status" value="1"/>
</dbReference>
<dbReference type="PANTHER" id="PTHR33517">
    <property type="entry name" value="PROTEIN FAM170B-RELATED"/>
    <property type="match status" value="1"/>
</dbReference>
<dbReference type="Pfam" id="PF17734">
    <property type="entry name" value="Spt46"/>
    <property type="match status" value="1"/>
</dbReference>
<accession>A1A519</accession>
<accession>Q66LM8</accession>
<accession>Q7Z4V2</accession>
<accession>Q8IW94</accession>
<keyword id="KW-0010">Activator</keyword>
<keyword id="KW-0025">Alternative splicing</keyword>
<keyword id="KW-0238">DNA-binding</keyword>
<keyword id="KW-0479">Metal-binding</keyword>
<keyword id="KW-0539">Nucleus</keyword>
<keyword id="KW-0597">Phosphoprotein</keyword>
<keyword id="KW-1267">Proteomics identification</keyword>
<keyword id="KW-1185">Reference proteome</keyword>
<keyword id="KW-0804">Transcription</keyword>
<keyword id="KW-0805">Transcription regulation</keyword>
<keyword id="KW-0862">Zinc</keyword>
<keyword id="KW-0863">Zinc-finger</keyword>
<name>F170A_HUMAN</name>